<reference evidence="6" key="1">
    <citation type="journal article" date="2016" name="Appl. Environ. Microbiol.">
        <title>Genomic and Transcriptional Mapping of PaMx41, Archetype of a New Lineage of Bacteriophages Infecting Pseudomonas aeruginosa.</title>
        <authorList>
            <person name="Cruz-Plancarte I."/>
            <person name="Cazares A."/>
            <person name="Guarneros G."/>
        </authorList>
    </citation>
    <scope>NUCLEOTIDE SEQUENCE [LARGE SCALE GENOMIC DNA]</scope>
    <scope>DEVELOPMENTAL STAGE</scope>
    <scope>IDENTIFICATION BY MASS SPECTROMETRY</scope>
</reference>
<reference key="2">
    <citation type="journal article" date="2023" name="Cell">
        <title>Bacteriophages inhibit and evade cGAS-like immune function in bacteria.</title>
        <authorList>
            <person name="Huiting E."/>
            <person name="Cao X."/>
            <person name="Ren J."/>
            <person name="Athukoralage J.S."/>
            <person name="Luo Z."/>
            <person name="Silas S."/>
            <person name="An N."/>
            <person name="Carion H."/>
            <person name="Zhou Y."/>
            <person name="Fraser J.S."/>
            <person name="Feng Y."/>
            <person name="Bondy-Denomy J."/>
        </authorList>
    </citation>
    <scope>FUNCTION</scope>
    <scope>MUTAGENESIS OF ILE-121; ILE-327 AND SER-330</scope>
    <source>
        <strain>PaMx41</strain>
    </source>
</reference>
<dbReference type="EMBL" id="KU884563">
    <property type="protein sequence ID" value="ANA48974.1"/>
    <property type="molecule type" value="Genomic_DNA"/>
</dbReference>
<dbReference type="SMR" id="A0A1C8HSP0"/>
<dbReference type="Proteomes" id="UP000230640">
    <property type="component" value="Genome"/>
</dbReference>
<dbReference type="GO" id="GO:0019028">
    <property type="term" value="C:viral capsid"/>
    <property type="evidence" value="ECO:0007669"/>
    <property type="project" value="UniProtKB-KW"/>
</dbReference>
<dbReference type="InterPro" id="IPR035198">
    <property type="entry name" value="SU10_MCP"/>
</dbReference>
<dbReference type="Pfam" id="PF17236">
    <property type="entry name" value="SU10_MCP"/>
    <property type="match status" value="1"/>
</dbReference>
<organism>
    <name type="scientific">Pseudomonas phage PaMx41</name>
    <dbReference type="NCBI Taxonomy" id="1815976"/>
    <lineage>
        <taxon>Viruses</taxon>
        <taxon>Duplodnaviria</taxon>
        <taxon>Heunggongvirae</taxon>
        <taxon>Uroviricota</taxon>
        <taxon>Caudoviricetes</taxon>
        <taxon>Fredfastierviridae</taxon>
        <taxon>Jamesmcgillvirus</taxon>
        <taxon>Jamesmcgillvirus PaMx41</taxon>
    </lineage>
</organism>
<sequence length="418" mass="45197">MSVYAGIFNTTLNPQELNMKSFAGTILRRVPNGSAPLLAMTSVVGSTTAKASTHGYFSKTMVFASAVVTAEAAADATVLTVENSDGLTKGMIFYNEATGENMRLELVNGLNLTVKRQTGRISAAIIAANTKLIVIGTAFEEGSQRPTARSIQPVYVPNFTQIFRNAWALTDTARASYAEAGYSNITESRRDCMDFHATEQETAIFFGQAFMGTYNGQPLHTTQGIVDAVRQYAPDNVNAMPNPTAVTYDDVVDATIDAFKWSVNVGDNTQRVMFCDTVGMRTMQDIGRFFGEVTVTQRETSYGMVFTEWKFFKGRLIIKEHPLFSAIGISPGFAVVVDVPAVKLAYMDGRNAKVENYGQGGGENKSGATDYSYGHGVDAQGGSLTSEWALELLNPQGCAVITGLQKAKERVYLTAPAP</sequence>
<feature type="chain" id="PRO_0000459555" description="Major capsid protein">
    <location>
        <begin position="1"/>
        <end position="418"/>
    </location>
</feature>
<feature type="mutagenesis site" description="Escapes CBASS defense in P.aeruginosa strain Pa011." evidence="2">
    <original>I</original>
    <variation>A</variation>
    <variation>T</variation>
    <location>
        <position position="121"/>
    </location>
</feature>
<feature type="mutagenesis site" description="Escapes CBASS defense in P.aeruginosa strain Pa011." evidence="2">
    <original>I</original>
    <variation>T</variation>
    <location>
        <position position="327"/>
    </location>
</feature>
<feature type="mutagenesis site" description="Escapes CBASS defense in P.aeruginosa strain Pa011." evidence="2">
    <original>S</original>
    <variation>P</variation>
    <location>
        <position position="330"/>
    </location>
</feature>
<comment type="function">
    <text evidence="1">The most highly expressed virion protein; probably the major capsid protein (PubMed:27590812).</text>
</comment>
<comment type="subunit">
    <text evidence="5">Multimerizes (PubMed:36750095).</text>
</comment>
<comment type="subcellular location">
    <subcellularLocation>
        <location evidence="4">Virion</location>
    </subcellularLocation>
</comment>
<comment type="developmental stage">
    <text evidence="1">A late gene transcribed by 45 minutes p.i., RNA is still detectable as cell lysis begins at 75 minutes p.i., (PubMed:27590812).</text>
</comment>
<comment type="miscellaneous">
    <text evidence="2 5">Mutations in this protein confer resistance to host-encoded CBASS type II-A(GA) viral defense (in P.aeruginosa strain BWHPSA011 / Pa011); overexpression of this protein alone in the host does not activate CBASS (PubMed:36750095). The above mutations are predicted to lie on protein-protein interfaces within or between monomers (Probable) (PubMed:36750095).</text>
</comment>
<accession>A0A1C8HSP0</accession>
<keyword id="KW-0167">Capsid protein</keyword>
<keyword id="KW-0426">Late protein</keyword>
<keyword id="KW-1185">Reference proteome</keyword>
<keyword id="KW-0946">Virion</keyword>
<name>CAPSD_BPPP4</name>
<gene>
    <name evidence="6" type="ORF">PaMx41_ORF11</name>
</gene>
<proteinExistence type="evidence at protein level"/>
<evidence type="ECO:0000269" key="1">
    <source>
    </source>
</evidence>
<evidence type="ECO:0000269" key="2">
    <source>
    </source>
</evidence>
<evidence type="ECO:0000303" key="3">
    <source>
    </source>
</evidence>
<evidence type="ECO:0000305" key="4">
    <source>
    </source>
</evidence>
<evidence type="ECO:0000305" key="5">
    <source>
    </source>
</evidence>
<evidence type="ECO:0000312" key="6">
    <source>
        <dbReference type="EMBL" id="ANA48974.1"/>
    </source>
</evidence>
<protein>
    <recommendedName>
        <fullName evidence="3">Major capsid protein</fullName>
    </recommendedName>
</protein>